<protein>
    <recommendedName>
        <fullName evidence="1">NADH-quinone oxidoreductase subunit N 1</fullName>
        <ecNumber evidence="1">7.1.1.-</ecNumber>
    </recommendedName>
    <alternativeName>
        <fullName evidence="1">NADH dehydrogenase I subunit N 1</fullName>
    </alternativeName>
    <alternativeName>
        <fullName evidence="1">NDH-1 subunit N 1</fullName>
    </alternativeName>
</protein>
<name>NUON1_RHIME</name>
<organism>
    <name type="scientific">Rhizobium meliloti (strain 1021)</name>
    <name type="common">Ensifer meliloti</name>
    <name type="synonym">Sinorhizobium meliloti</name>
    <dbReference type="NCBI Taxonomy" id="266834"/>
    <lineage>
        <taxon>Bacteria</taxon>
        <taxon>Pseudomonadati</taxon>
        <taxon>Pseudomonadota</taxon>
        <taxon>Alphaproteobacteria</taxon>
        <taxon>Hyphomicrobiales</taxon>
        <taxon>Rhizobiaceae</taxon>
        <taxon>Sinorhizobium/Ensifer group</taxon>
        <taxon>Sinorhizobium</taxon>
    </lineage>
</organism>
<comment type="function">
    <text evidence="1">NDH-1 shuttles electrons from NADH, via FMN and iron-sulfur (Fe-S) centers, to quinones in the respiratory chain. The immediate electron acceptor for the enzyme in this species is believed to be ubiquinone. Couples the redox reaction to proton translocation (for every two electrons transferred, four hydrogen ions are translocated across the cytoplasmic membrane), and thus conserves the redox energy in a proton gradient.</text>
</comment>
<comment type="catalytic activity">
    <reaction evidence="1">
        <text>a quinone + NADH + 5 H(+)(in) = a quinol + NAD(+) + 4 H(+)(out)</text>
        <dbReference type="Rhea" id="RHEA:57888"/>
        <dbReference type="ChEBI" id="CHEBI:15378"/>
        <dbReference type="ChEBI" id="CHEBI:24646"/>
        <dbReference type="ChEBI" id="CHEBI:57540"/>
        <dbReference type="ChEBI" id="CHEBI:57945"/>
        <dbReference type="ChEBI" id="CHEBI:132124"/>
    </reaction>
</comment>
<comment type="subunit">
    <text evidence="1">NDH-1 is composed of 14 different subunits. Subunits NuoA, H, J, K, L, M, N constitute the membrane sector of the complex.</text>
</comment>
<comment type="subcellular location">
    <subcellularLocation>
        <location evidence="1">Cell inner membrane</location>
        <topology evidence="1">Multi-pass membrane protein</topology>
    </subcellularLocation>
</comment>
<comment type="similarity">
    <text evidence="1">Belongs to the complex I subunit 2 family.</text>
</comment>
<keyword id="KW-0997">Cell inner membrane</keyword>
<keyword id="KW-1003">Cell membrane</keyword>
<keyword id="KW-0472">Membrane</keyword>
<keyword id="KW-0520">NAD</keyword>
<keyword id="KW-0874">Quinone</keyword>
<keyword id="KW-1185">Reference proteome</keyword>
<keyword id="KW-1278">Translocase</keyword>
<keyword id="KW-0812">Transmembrane</keyword>
<keyword id="KW-1133">Transmembrane helix</keyword>
<keyword id="KW-0813">Transport</keyword>
<keyword id="KW-0830">Ubiquinone</keyword>
<sequence>MTAETLIASLQLSMPELILAVGAMALLMIGVFSGERATPTVTGLAVAVLIIAGLWLVLKTGEGEAYGGAFLSDPFAKFMKVLALIGSITVMVMTVGHARSAQIDRFEFPVLLVLATLGMLLMISANDLISLYLSLELQSLALYVVAAINRDSVRSTEAGLKYFVLGALSSGMMLYGMSLVYGFTGHTGFDEIAAALTAEGRSLGLVFGLVFILAGLAFKISAVPFHMWTPDVYEGAPTPVTAFFAAGPKVAAISILVRIVINAFEPVVADWQQIIVFISIASMLLGSFAAIGQRNIKRLMAYSSIGHMGYALVGLAAGSMAGVRGVILYMLIYMVMTLGTFACILAMRRREGEHVEGIDDLAGLSQTNPFMATVLTILMFSLAGIPPLAGFFAKYFVFVAAIEAQLYGLAIIGVLASVVGAYYYLRVIKVMWFEEPRGEFARTAGELRLVFGLSGLFVLGYVLIGGPLGTAAEAAARTFF</sequence>
<gene>
    <name evidence="1" type="primary">nuoN1</name>
    <name type="ordered locus">R01279</name>
    <name type="ORF">SMc01927</name>
</gene>
<accession>Q92QN9</accession>
<dbReference type="EC" id="7.1.1.-" evidence="1"/>
<dbReference type="EMBL" id="AL591688">
    <property type="protein sequence ID" value="CAC45858.1"/>
    <property type="molecule type" value="Genomic_DNA"/>
</dbReference>
<dbReference type="RefSeq" id="NP_385385.1">
    <property type="nucleotide sequence ID" value="NC_003047.1"/>
</dbReference>
<dbReference type="SMR" id="Q92QN9"/>
<dbReference type="EnsemblBacteria" id="CAC45858">
    <property type="protein sequence ID" value="CAC45858"/>
    <property type="gene ID" value="SMc01927"/>
</dbReference>
<dbReference type="KEGG" id="sme:SMc01927"/>
<dbReference type="PATRIC" id="fig|266834.11.peg.2693"/>
<dbReference type="eggNOG" id="COG1007">
    <property type="taxonomic scope" value="Bacteria"/>
</dbReference>
<dbReference type="HOGENOM" id="CLU_007100_1_3_5"/>
<dbReference type="OrthoDB" id="9811718at2"/>
<dbReference type="Proteomes" id="UP000001976">
    <property type="component" value="Chromosome"/>
</dbReference>
<dbReference type="GO" id="GO:0005886">
    <property type="term" value="C:plasma membrane"/>
    <property type="evidence" value="ECO:0007669"/>
    <property type="project" value="UniProtKB-SubCell"/>
</dbReference>
<dbReference type="GO" id="GO:0008137">
    <property type="term" value="F:NADH dehydrogenase (ubiquinone) activity"/>
    <property type="evidence" value="ECO:0007669"/>
    <property type="project" value="InterPro"/>
</dbReference>
<dbReference type="GO" id="GO:0050136">
    <property type="term" value="F:NADH:ubiquinone reductase (non-electrogenic) activity"/>
    <property type="evidence" value="ECO:0007669"/>
    <property type="project" value="UniProtKB-UniRule"/>
</dbReference>
<dbReference type="GO" id="GO:0048038">
    <property type="term" value="F:quinone binding"/>
    <property type="evidence" value="ECO:0007669"/>
    <property type="project" value="UniProtKB-KW"/>
</dbReference>
<dbReference type="GO" id="GO:0042773">
    <property type="term" value="P:ATP synthesis coupled electron transport"/>
    <property type="evidence" value="ECO:0007669"/>
    <property type="project" value="InterPro"/>
</dbReference>
<dbReference type="HAMAP" id="MF_00445">
    <property type="entry name" value="NDH1_NuoN_1"/>
    <property type="match status" value="1"/>
</dbReference>
<dbReference type="InterPro" id="IPR010096">
    <property type="entry name" value="NADH-Q_OxRdtase_suN/2"/>
</dbReference>
<dbReference type="InterPro" id="IPR001750">
    <property type="entry name" value="ND/Mrp_TM"/>
</dbReference>
<dbReference type="NCBIfam" id="TIGR01770">
    <property type="entry name" value="NDH_I_N"/>
    <property type="match status" value="1"/>
</dbReference>
<dbReference type="NCBIfam" id="NF004440">
    <property type="entry name" value="PRK05777.1-3"/>
    <property type="match status" value="1"/>
</dbReference>
<dbReference type="PANTHER" id="PTHR22773">
    <property type="entry name" value="NADH DEHYDROGENASE"/>
    <property type="match status" value="1"/>
</dbReference>
<dbReference type="Pfam" id="PF00361">
    <property type="entry name" value="Proton_antipo_M"/>
    <property type="match status" value="1"/>
</dbReference>
<dbReference type="PRINTS" id="PR01434">
    <property type="entry name" value="NADHDHGNASE5"/>
</dbReference>
<evidence type="ECO:0000255" key="1">
    <source>
        <dbReference type="HAMAP-Rule" id="MF_00445"/>
    </source>
</evidence>
<reference key="1">
    <citation type="journal article" date="2001" name="Proc. Natl. Acad. Sci. U.S.A.">
        <title>Analysis of the chromosome sequence of the legume symbiont Sinorhizobium meliloti strain 1021.</title>
        <authorList>
            <person name="Capela D."/>
            <person name="Barloy-Hubler F."/>
            <person name="Gouzy J."/>
            <person name="Bothe G."/>
            <person name="Ampe F."/>
            <person name="Batut J."/>
            <person name="Boistard P."/>
            <person name="Becker A."/>
            <person name="Boutry M."/>
            <person name="Cadieu E."/>
            <person name="Dreano S."/>
            <person name="Gloux S."/>
            <person name="Godrie T."/>
            <person name="Goffeau A."/>
            <person name="Kahn D."/>
            <person name="Kiss E."/>
            <person name="Lelaure V."/>
            <person name="Masuy D."/>
            <person name="Pohl T."/>
            <person name="Portetelle D."/>
            <person name="Puehler A."/>
            <person name="Purnelle B."/>
            <person name="Ramsperger U."/>
            <person name="Renard C."/>
            <person name="Thebault P."/>
            <person name="Vandenbol M."/>
            <person name="Weidner S."/>
            <person name="Galibert F."/>
        </authorList>
    </citation>
    <scope>NUCLEOTIDE SEQUENCE [LARGE SCALE GENOMIC DNA]</scope>
    <source>
        <strain>1021</strain>
    </source>
</reference>
<reference key="2">
    <citation type="journal article" date="2001" name="Science">
        <title>The composite genome of the legume symbiont Sinorhizobium meliloti.</title>
        <authorList>
            <person name="Galibert F."/>
            <person name="Finan T.M."/>
            <person name="Long S.R."/>
            <person name="Puehler A."/>
            <person name="Abola P."/>
            <person name="Ampe F."/>
            <person name="Barloy-Hubler F."/>
            <person name="Barnett M.J."/>
            <person name="Becker A."/>
            <person name="Boistard P."/>
            <person name="Bothe G."/>
            <person name="Boutry M."/>
            <person name="Bowser L."/>
            <person name="Buhrmester J."/>
            <person name="Cadieu E."/>
            <person name="Capela D."/>
            <person name="Chain P."/>
            <person name="Cowie A."/>
            <person name="Davis R.W."/>
            <person name="Dreano S."/>
            <person name="Federspiel N.A."/>
            <person name="Fisher R.F."/>
            <person name="Gloux S."/>
            <person name="Godrie T."/>
            <person name="Goffeau A."/>
            <person name="Golding B."/>
            <person name="Gouzy J."/>
            <person name="Gurjal M."/>
            <person name="Hernandez-Lucas I."/>
            <person name="Hong A."/>
            <person name="Huizar L."/>
            <person name="Hyman R.W."/>
            <person name="Jones T."/>
            <person name="Kahn D."/>
            <person name="Kahn M.L."/>
            <person name="Kalman S."/>
            <person name="Keating D.H."/>
            <person name="Kiss E."/>
            <person name="Komp C."/>
            <person name="Lelaure V."/>
            <person name="Masuy D."/>
            <person name="Palm C."/>
            <person name="Peck M.C."/>
            <person name="Pohl T.M."/>
            <person name="Portetelle D."/>
            <person name="Purnelle B."/>
            <person name="Ramsperger U."/>
            <person name="Surzycki R."/>
            <person name="Thebault P."/>
            <person name="Vandenbol M."/>
            <person name="Vorhoelter F.J."/>
            <person name="Weidner S."/>
            <person name="Wells D.H."/>
            <person name="Wong K."/>
            <person name="Yeh K.-C."/>
            <person name="Batut J."/>
        </authorList>
    </citation>
    <scope>NUCLEOTIDE SEQUENCE [LARGE SCALE GENOMIC DNA]</scope>
    <source>
        <strain>1021</strain>
    </source>
</reference>
<feature type="chain" id="PRO_0000391211" description="NADH-quinone oxidoreductase subunit N 1">
    <location>
        <begin position="1"/>
        <end position="480"/>
    </location>
</feature>
<feature type="transmembrane region" description="Helical" evidence="1">
    <location>
        <begin position="12"/>
        <end position="32"/>
    </location>
</feature>
<feature type="transmembrane region" description="Helical" evidence="1">
    <location>
        <begin position="38"/>
        <end position="58"/>
    </location>
</feature>
<feature type="transmembrane region" description="Helical" evidence="1">
    <location>
        <begin position="78"/>
        <end position="98"/>
    </location>
</feature>
<feature type="transmembrane region" description="Helical" evidence="1">
    <location>
        <begin position="106"/>
        <end position="126"/>
    </location>
</feature>
<feature type="transmembrane region" description="Helical" evidence="1">
    <location>
        <begin position="128"/>
        <end position="148"/>
    </location>
</feature>
<feature type="transmembrane region" description="Helical" evidence="1">
    <location>
        <begin position="163"/>
        <end position="183"/>
    </location>
</feature>
<feature type="transmembrane region" description="Helical" evidence="1">
    <location>
        <begin position="203"/>
        <end position="223"/>
    </location>
</feature>
<feature type="transmembrane region" description="Helical" evidence="1">
    <location>
        <begin position="241"/>
        <end position="261"/>
    </location>
</feature>
<feature type="transmembrane region" description="Helical" evidence="1">
    <location>
        <begin position="271"/>
        <end position="291"/>
    </location>
</feature>
<feature type="transmembrane region" description="Helical" evidence="1">
    <location>
        <begin position="303"/>
        <end position="323"/>
    </location>
</feature>
<feature type="transmembrane region" description="Helical" evidence="1">
    <location>
        <begin position="326"/>
        <end position="346"/>
    </location>
</feature>
<feature type="transmembrane region" description="Helical" evidence="1">
    <location>
        <begin position="372"/>
        <end position="392"/>
    </location>
</feature>
<feature type="transmembrane region" description="Helical" evidence="1">
    <location>
        <begin position="396"/>
        <end position="416"/>
    </location>
</feature>
<feature type="transmembrane region" description="Helical" evidence="1">
    <location>
        <begin position="449"/>
        <end position="469"/>
    </location>
</feature>
<proteinExistence type="inferred from homology"/>